<organism>
    <name type="scientific">Lactiplantibacillus plantarum (strain ATCC BAA-793 / NCIMB 8826 / WCFS1)</name>
    <name type="common">Lactobacillus plantarum</name>
    <dbReference type="NCBI Taxonomy" id="220668"/>
    <lineage>
        <taxon>Bacteria</taxon>
        <taxon>Bacillati</taxon>
        <taxon>Bacillota</taxon>
        <taxon>Bacilli</taxon>
        <taxon>Lactobacillales</taxon>
        <taxon>Lactobacillaceae</taxon>
        <taxon>Lactiplantibacillus</taxon>
    </lineage>
</organism>
<gene>
    <name evidence="1" type="primary">murQ2</name>
    <name type="ordered locus">lp_3523</name>
</gene>
<sequence length="296" mass="31441">MNLEKLTTETRNQKTMALDMLSVKEMLELMNQEDQRVPVAVSKELPQIECAVDKIVANFKAGGRLIYMGAGTSGRLGVLDAAECVPTFGTSPEMVQGLIAGGMSAMTVAVEGAEDSIELGQQDLVDLHLTSHDTVVGVAASGRTPYVIGGLDYACEVGATTVSIACNADASISQHAQIPIEVEVGPEILTGSTRLKSGTAQKLVLNMLSTASMVGIGKVYKNLMVDVKPTNEKLVERAKRIIVQATDCSDETAVKVFMTADQNVKLAIVMVLTNMSKAEASVRLDHANGFVRQAVN</sequence>
<reference key="1">
    <citation type="journal article" date="2003" name="Proc. Natl. Acad. Sci. U.S.A.">
        <title>Complete genome sequence of Lactobacillus plantarum WCFS1.</title>
        <authorList>
            <person name="Kleerebezem M."/>
            <person name="Boekhorst J."/>
            <person name="van Kranenburg R."/>
            <person name="Molenaar D."/>
            <person name="Kuipers O.P."/>
            <person name="Leer R."/>
            <person name="Tarchini R."/>
            <person name="Peters S.A."/>
            <person name="Sandbrink H.M."/>
            <person name="Fiers M.W.E.J."/>
            <person name="Stiekema W."/>
            <person name="Klein Lankhorst R.M."/>
            <person name="Bron P.A."/>
            <person name="Hoffer S.M."/>
            <person name="Nierop Groot M.N."/>
            <person name="Kerkhoven R."/>
            <person name="De Vries M."/>
            <person name="Ursing B."/>
            <person name="De Vos W.M."/>
            <person name="Siezen R.J."/>
        </authorList>
    </citation>
    <scope>NUCLEOTIDE SEQUENCE [LARGE SCALE GENOMIC DNA]</scope>
    <source>
        <strain>ATCC BAA-793 / NCIMB 8826 / WCFS1</strain>
    </source>
</reference>
<reference key="2">
    <citation type="journal article" date="2012" name="J. Bacteriol.">
        <title>Complete resequencing and reannotation of the Lactobacillus plantarum WCFS1 genome.</title>
        <authorList>
            <person name="Siezen R.J."/>
            <person name="Francke C."/>
            <person name="Renckens B."/>
            <person name="Boekhorst J."/>
            <person name="Wels M."/>
            <person name="Kleerebezem M."/>
            <person name="van Hijum S.A."/>
        </authorList>
    </citation>
    <scope>NUCLEOTIDE SEQUENCE [LARGE SCALE GENOMIC DNA]</scope>
    <scope>GENOME REANNOTATION</scope>
    <source>
        <strain>ATCC BAA-793 / NCIMB 8826 / WCFS1</strain>
    </source>
</reference>
<comment type="function">
    <text evidence="1">Specifically catalyzes the cleavage of the D-lactyl ether substituent of MurNAc 6-phosphate, producing GlcNAc 6-phosphate and D-lactate.</text>
</comment>
<comment type="catalytic activity">
    <reaction evidence="1">
        <text>N-acetyl-D-muramate 6-phosphate + H2O = N-acetyl-D-glucosamine 6-phosphate + (R)-lactate</text>
        <dbReference type="Rhea" id="RHEA:26410"/>
        <dbReference type="ChEBI" id="CHEBI:15377"/>
        <dbReference type="ChEBI" id="CHEBI:16004"/>
        <dbReference type="ChEBI" id="CHEBI:57513"/>
        <dbReference type="ChEBI" id="CHEBI:58722"/>
        <dbReference type="EC" id="4.2.1.126"/>
    </reaction>
</comment>
<comment type="pathway">
    <text evidence="1">Amino-sugar metabolism; N-acetylmuramate degradation.</text>
</comment>
<comment type="subunit">
    <text evidence="1">Homodimer.</text>
</comment>
<comment type="miscellaneous">
    <text evidence="1">A lyase-type mechanism (elimination/hydration) is suggested for the cleavage of the lactyl ether bond of MurNAc 6-phosphate, with the formation of an alpha,beta-unsaturated aldehyde intermediate with (E)-stereochemistry, followed by the syn addition of water to give product.</text>
</comment>
<comment type="similarity">
    <text evidence="1">Belongs to the GCKR-like family. MurNAc-6-P etherase subfamily.</text>
</comment>
<protein>
    <recommendedName>
        <fullName evidence="1">N-acetylmuramic acid 6-phosphate etherase 2</fullName>
        <shortName evidence="1">MurNAc-6-P etherase 2</shortName>
        <ecNumber evidence="1">4.2.1.126</ecNumber>
    </recommendedName>
    <alternativeName>
        <fullName evidence="1">N-acetylmuramic acid 6-phosphate hydrolase 2</fullName>
    </alternativeName>
    <alternativeName>
        <fullName evidence="1">N-acetylmuramic acid 6-phosphate lyase 2</fullName>
    </alternativeName>
</protein>
<feature type="chain" id="PRO_0000249632" description="N-acetylmuramic acid 6-phosphate etherase 2">
    <location>
        <begin position="1"/>
        <end position="296"/>
    </location>
</feature>
<feature type="domain" description="SIS" evidence="1">
    <location>
        <begin position="55"/>
        <end position="218"/>
    </location>
</feature>
<feature type="active site" description="Proton donor" evidence="1">
    <location>
        <position position="83"/>
    </location>
</feature>
<feature type="active site" evidence="1">
    <location>
        <position position="114"/>
    </location>
</feature>
<name>MURQ2_LACPL</name>
<proteinExistence type="inferred from homology"/>
<accession>Q88SB0</accession>
<accession>F9UUI7</accession>
<keyword id="KW-0119">Carbohydrate metabolism</keyword>
<keyword id="KW-0456">Lyase</keyword>
<keyword id="KW-1185">Reference proteome</keyword>
<dbReference type="EC" id="4.2.1.126" evidence="1"/>
<dbReference type="EMBL" id="AL935263">
    <property type="protein sequence ID" value="CCC80489.1"/>
    <property type="molecule type" value="Genomic_DNA"/>
</dbReference>
<dbReference type="RefSeq" id="YP_004891003.1">
    <property type="nucleotide sequence ID" value="NC_004567.2"/>
</dbReference>
<dbReference type="SMR" id="Q88SB0"/>
<dbReference type="STRING" id="220668.lp_3523"/>
<dbReference type="EnsemblBacteria" id="CCC80489">
    <property type="protein sequence ID" value="CCC80489"/>
    <property type="gene ID" value="lp_3523"/>
</dbReference>
<dbReference type="KEGG" id="lpl:lp_3523"/>
<dbReference type="PATRIC" id="fig|220668.9.peg.2937"/>
<dbReference type="eggNOG" id="COG2103">
    <property type="taxonomic scope" value="Bacteria"/>
</dbReference>
<dbReference type="HOGENOM" id="CLU_049049_1_1_9"/>
<dbReference type="OrthoDB" id="9813395at2"/>
<dbReference type="PhylomeDB" id="Q88SB0"/>
<dbReference type="UniPathway" id="UPA00342"/>
<dbReference type="Proteomes" id="UP000000432">
    <property type="component" value="Chromosome"/>
</dbReference>
<dbReference type="GO" id="GO:0097367">
    <property type="term" value="F:carbohydrate derivative binding"/>
    <property type="evidence" value="ECO:0007669"/>
    <property type="project" value="InterPro"/>
</dbReference>
<dbReference type="GO" id="GO:0016835">
    <property type="term" value="F:carbon-oxygen lyase activity"/>
    <property type="evidence" value="ECO:0007669"/>
    <property type="project" value="UniProtKB-UniRule"/>
</dbReference>
<dbReference type="GO" id="GO:0016803">
    <property type="term" value="F:ether hydrolase activity"/>
    <property type="evidence" value="ECO:0007669"/>
    <property type="project" value="TreeGrafter"/>
</dbReference>
<dbReference type="GO" id="GO:0046348">
    <property type="term" value="P:amino sugar catabolic process"/>
    <property type="evidence" value="ECO:0007669"/>
    <property type="project" value="InterPro"/>
</dbReference>
<dbReference type="GO" id="GO:0097173">
    <property type="term" value="P:N-acetylmuramic acid catabolic process"/>
    <property type="evidence" value="ECO:0007669"/>
    <property type="project" value="UniProtKB-UniPathway"/>
</dbReference>
<dbReference type="GO" id="GO:0009254">
    <property type="term" value="P:peptidoglycan turnover"/>
    <property type="evidence" value="ECO:0007669"/>
    <property type="project" value="TreeGrafter"/>
</dbReference>
<dbReference type="CDD" id="cd05007">
    <property type="entry name" value="SIS_Etherase"/>
    <property type="match status" value="1"/>
</dbReference>
<dbReference type="FunFam" id="1.10.8.1080:FF:000001">
    <property type="entry name" value="N-acetylmuramic acid 6-phosphate etherase"/>
    <property type="match status" value="1"/>
</dbReference>
<dbReference type="FunFam" id="3.40.50.10490:FF:000014">
    <property type="entry name" value="N-acetylmuramic acid 6-phosphate etherase"/>
    <property type="match status" value="1"/>
</dbReference>
<dbReference type="Gene3D" id="1.10.8.1080">
    <property type="match status" value="1"/>
</dbReference>
<dbReference type="Gene3D" id="3.40.50.10490">
    <property type="entry name" value="Glucose-6-phosphate isomerase like protein, domain 1"/>
    <property type="match status" value="1"/>
</dbReference>
<dbReference type="HAMAP" id="MF_00068">
    <property type="entry name" value="MurQ"/>
    <property type="match status" value="1"/>
</dbReference>
<dbReference type="InterPro" id="IPR005488">
    <property type="entry name" value="Etherase_MurQ"/>
</dbReference>
<dbReference type="InterPro" id="IPR005486">
    <property type="entry name" value="Glucokinase_regulatory_CS"/>
</dbReference>
<dbReference type="InterPro" id="IPR040190">
    <property type="entry name" value="MURQ/GCKR"/>
</dbReference>
<dbReference type="InterPro" id="IPR001347">
    <property type="entry name" value="SIS_dom"/>
</dbReference>
<dbReference type="InterPro" id="IPR046348">
    <property type="entry name" value="SIS_dom_sf"/>
</dbReference>
<dbReference type="NCBIfam" id="TIGR00274">
    <property type="entry name" value="N-acetylmuramic acid 6-phosphate etherase"/>
    <property type="match status" value="1"/>
</dbReference>
<dbReference type="NCBIfam" id="NF003915">
    <property type="entry name" value="PRK05441.1"/>
    <property type="match status" value="1"/>
</dbReference>
<dbReference type="NCBIfam" id="NF009222">
    <property type="entry name" value="PRK12570.1"/>
    <property type="match status" value="1"/>
</dbReference>
<dbReference type="PANTHER" id="PTHR10088">
    <property type="entry name" value="GLUCOKINASE REGULATORY PROTEIN"/>
    <property type="match status" value="1"/>
</dbReference>
<dbReference type="PANTHER" id="PTHR10088:SF4">
    <property type="entry name" value="GLUCOKINASE REGULATORY PROTEIN"/>
    <property type="match status" value="1"/>
</dbReference>
<dbReference type="Pfam" id="PF22645">
    <property type="entry name" value="GKRP_SIS_N"/>
    <property type="match status" value="1"/>
</dbReference>
<dbReference type="SUPFAM" id="SSF53697">
    <property type="entry name" value="SIS domain"/>
    <property type="match status" value="1"/>
</dbReference>
<dbReference type="PROSITE" id="PS01272">
    <property type="entry name" value="GCKR"/>
    <property type="match status" value="1"/>
</dbReference>
<dbReference type="PROSITE" id="PS51464">
    <property type="entry name" value="SIS"/>
    <property type="match status" value="1"/>
</dbReference>
<evidence type="ECO:0000255" key="1">
    <source>
        <dbReference type="HAMAP-Rule" id="MF_00068"/>
    </source>
</evidence>